<keyword id="KW-0963">Cytoplasm</keyword>
<keyword id="KW-1185">Reference proteome</keyword>
<keyword id="KW-0704">Schiff base</keyword>
<keyword id="KW-0784">Thiamine biosynthesis</keyword>
<keyword id="KW-0808">Transferase</keyword>
<gene>
    <name evidence="1" type="primary">thiG</name>
    <name type="ordered locus">sce4242</name>
</gene>
<reference key="1">
    <citation type="journal article" date="2007" name="Nat. Biotechnol.">
        <title>Complete genome sequence of the myxobacterium Sorangium cellulosum.</title>
        <authorList>
            <person name="Schneiker S."/>
            <person name="Perlova O."/>
            <person name="Kaiser O."/>
            <person name="Gerth K."/>
            <person name="Alici A."/>
            <person name="Altmeyer M.O."/>
            <person name="Bartels D."/>
            <person name="Bekel T."/>
            <person name="Beyer S."/>
            <person name="Bode E."/>
            <person name="Bode H.B."/>
            <person name="Bolten C.J."/>
            <person name="Choudhuri J.V."/>
            <person name="Doss S."/>
            <person name="Elnakady Y.A."/>
            <person name="Frank B."/>
            <person name="Gaigalat L."/>
            <person name="Goesmann A."/>
            <person name="Groeger C."/>
            <person name="Gross F."/>
            <person name="Jelsbak L."/>
            <person name="Jelsbak L."/>
            <person name="Kalinowski J."/>
            <person name="Kegler C."/>
            <person name="Knauber T."/>
            <person name="Konietzny S."/>
            <person name="Kopp M."/>
            <person name="Krause L."/>
            <person name="Krug D."/>
            <person name="Linke B."/>
            <person name="Mahmud T."/>
            <person name="Martinez-Arias R."/>
            <person name="McHardy A.C."/>
            <person name="Merai M."/>
            <person name="Meyer F."/>
            <person name="Mormann S."/>
            <person name="Munoz-Dorado J."/>
            <person name="Perez J."/>
            <person name="Pradella S."/>
            <person name="Rachid S."/>
            <person name="Raddatz G."/>
            <person name="Rosenau F."/>
            <person name="Rueckert C."/>
            <person name="Sasse F."/>
            <person name="Scharfe M."/>
            <person name="Schuster S.C."/>
            <person name="Suen G."/>
            <person name="Treuner-Lange A."/>
            <person name="Velicer G.J."/>
            <person name="Vorholter F.-J."/>
            <person name="Weissman K.J."/>
            <person name="Welch R.D."/>
            <person name="Wenzel S.C."/>
            <person name="Whitworth D.E."/>
            <person name="Wilhelm S."/>
            <person name="Wittmann C."/>
            <person name="Bloecker H."/>
            <person name="Puehler A."/>
            <person name="Mueller R."/>
        </authorList>
    </citation>
    <scope>NUCLEOTIDE SEQUENCE [LARGE SCALE GENOMIC DNA]</scope>
    <source>
        <strain>So ce56</strain>
    </source>
</reference>
<dbReference type="EC" id="2.8.1.10" evidence="1"/>
<dbReference type="EMBL" id="AM746676">
    <property type="protein sequence ID" value="CAN94405.1"/>
    <property type="molecule type" value="Genomic_DNA"/>
</dbReference>
<dbReference type="RefSeq" id="WP_012236875.1">
    <property type="nucleotide sequence ID" value="NC_010162.1"/>
</dbReference>
<dbReference type="SMR" id="A9EXF3"/>
<dbReference type="STRING" id="448385.sce4242"/>
<dbReference type="KEGG" id="scl:sce4242"/>
<dbReference type="eggNOG" id="COG2022">
    <property type="taxonomic scope" value="Bacteria"/>
</dbReference>
<dbReference type="HOGENOM" id="CLU_062233_1_0_7"/>
<dbReference type="OrthoDB" id="9805935at2"/>
<dbReference type="BioCyc" id="SCEL448385:SCE_RS21795-MONOMER"/>
<dbReference type="UniPathway" id="UPA00060"/>
<dbReference type="Proteomes" id="UP000002139">
    <property type="component" value="Chromosome"/>
</dbReference>
<dbReference type="GO" id="GO:0005737">
    <property type="term" value="C:cytoplasm"/>
    <property type="evidence" value="ECO:0007669"/>
    <property type="project" value="UniProtKB-SubCell"/>
</dbReference>
<dbReference type="GO" id="GO:1990107">
    <property type="term" value="F:thiazole synthase activity"/>
    <property type="evidence" value="ECO:0007669"/>
    <property type="project" value="UniProtKB-EC"/>
</dbReference>
<dbReference type="GO" id="GO:0009229">
    <property type="term" value="P:thiamine diphosphate biosynthetic process"/>
    <property type="evidence" value="ECO:0007669"/>
    <property type="project" value="UniProtKB-UniRule"/>
</dbReference>
<dbReference type="CDD" id="cd04728">
    <property type="entry name" value="ThiG"/>
    <property type="match status" value="1"/>
</dbReference>
<dbReference type="FunFam" id="3.20.20.70:FF:000049">
    <property type="entry name" value="Thiazole synthase"/>
    <property type="match status" value="1"/>
</dbReference>
<dbReference type="Gene3D" id="3.20.20.70">
    <property type="entry name" value="Aldolase class I"/>
    <property type="match status" value="1"/>
</dbReference>
<dbReference type="HAMAP" id="MF_00443">
    <property type="entry name" value="ThiG"/>
    <property type="match status" value="1"/>
</dbReference>
<dbReference type="InterPro" id="IPR013785">
    <property type="entry name" value="Aldolase_TIM"/>
</dbReference>
<dbReference type="InterPro" id="IPR033983">
    <property type="entry name" value="Thiazole_synthase_ThiG"/>
</dbReference>
<dbReference type="InterPro" id="IPR008867">
    <property type="entry name" value="ThiG"/>
</dbReference>
<dbReference type="PANTHER" id="PTHR34266">
    <property type="entry name" value="THIAZOLE SYNTHASE"/>
    <property type="match status" value="1"/>
</dbReference>
<dbReference type="PANTHER" id="PTHR34266:SF2">
    <property type="entry name" value="THIAZOLE SYNTHASE"/>
    <property type="match status" value="1"/>
</dbReference>
<dbReference type="Pfam" id="PF05690">
    <property type="entry name" value="ThiG"/>
    <property type="match status" value="1"/>
</dbReference>
<dbReference type="SUPFAM" id="SSF110399">
    <property type="entry name" value="ThiG-like"/>
    <property type="match status" value="1"/>
</dbReference>
<evidence type="ECO:0000255" key="1">
    <source>
        <dbReference type="HAMAP-Rule" id="MF_00443"/>
    </source>
</evidence>
<sequence>MTSDALTIGRYTFTSRLFVGTGKYKDLDETRRALEASGAEVVTVALRRVNLKERGEGSMMSLLQQGRVTILPNTAGCYTVEDAVRTCRLARELGLSDLVKLEVIGDERTLFPDNEATLEAARILVKEGFTVLPYCMDDPIVCRKLEDIGCAAVMPLAAPIGSGLGIRNPYNLMIIRETAKVPVIVDAGVGTASDAAVAMELGCDGVLMNTAIAGARDPILMAQAMKDAVRAGRMAYLAGRMPKKLYATASSPEQGKIAAL</sequence>
<proteinExistence type="inferred from homology"/>
<accession>A9EXF3</accession>
<name>THIG_SORC5</name>
<protein>
    <recommendedName>
        <fullName evidence="1">Thiazole synthase</fullName>
        <ecNumber evidence="1">2.8.1.10</ecNumber>
    </recommendedName>
</protein>
<comment type="function">
    <text evidence="1">Catalyzes the rearrangement of 1-deoxy-D-xylulose 5-phosphate (DXP) to produce the thiazole phosphate moiety of thiamine. Sulfur is provided by the thiocarboxylate moiety of the carrier protein ThiS. In vitro, sulfur can be provided by H(2)S.</text>
</comment>
<comment type="catalytic activity">
    <reaction evidence="1">
        <text>[ThiS sulfur-carrier protein]-C-terminal-Gly-aminoethanethioate + 2-iminoacetate + 1-deoxy-D-xylulose 5-phosphate = [ThiS sulfur-carrier protein]-C-terminal Gly-Gly + 2-[(2R,5Z)-2-carboxy-4-methylthiazol-5(2H)-ylidene]ethyl phosphate + 2 H2O + H(+)</text>
        <dbReference type="Rhea" id="RHEA:26297"/>
        <dbReference type="Rhea" id="RHEA-COMP:12909"/>
        <dbReference type="Rhea" id="RHEA-COMP:19908"/>
        <dbReference type="ChEBI" id="CHEBI:15377"/>
        <dbReference type="ChEBI" id="CHEBI:15378"/>
        <dbReference type="ChEBI" id="CHEBI:57792"/>
        <dbReference type="ChEBI" id="CHEBI:62899"/>
        <dbReference type="ChEBI" id="CHEBI:77846"/>
        <dbReference type="ChEBI" id="CHEBI:90778"/>
        <dbReference type="ChEBI" id="CHEBI:232372"/>
        <dbReference type="EC" id="2.8.1.10"/>
    </reaction>
</comment>
<comment type="pathway">
    <text evidence="1">Cofactor biosynthesis; thiamine diphosphate biosynthesis.</text>
</comment>
<comment type="subunit">
    <text evidence="1">Homotetramer. Forms heterodimers with either ThiH or ThiS.</text>
</comment>
<comment type="subcellular location">
    <subcellularLocation>
        <location evidence="1">Cytoplasm</location>
    </subcellularLocation>
</comment>
<comment type="similarity">
    <text evidence="1">Belongs to the ThiG family.</text>
</comment>
<organism>
    <name type="scientific">Sorangium cellulosum (strain So ce56)</name>
    <name type="common">Polyangium cellulosum (strain So ce56)</name>
    <dbReference type="NCBI Taxonomy" id="448385"/>
    <lineage>
        <taxon>Bacteria</taxon>
        <taxon>Pseudomonadati</taxon>
        <taxon>Myxococcota</taxon>
        <taxon>Polyangia</taxon>
        <taxon>Polyangiales</taxon>
        <taxon>Polyangiaceae</taxon>
        <taxon>Sorangium</taxon>
    </lineage>
</organism>
<feature type="chain" id="PRO_1000196903" description="Thiazole synthase">
    <location>
        <begin position="1"/>
        <end position="260"/>
    </location>
</feature>
<feature type="active site" description="Schiff-base intermediate with DXP" evidence="1">
    <location>
        <position position="100"/>
    </location>
</feature>
<feature type="binding site" evidence="1">
    <location>
        <position position="161"/>
    </location>
    <ligand>
        <name>1-deoxy-D-xylulose 5-phosphate</name>
        <dbReference type="ChEBI" id="CHEBI:57792"/>
    </ligand>
</feature>
<feature type="binding site" evidence="1">
    <location>
        <begin position="187"/>
        <end position="188"/>
    </location>
    <ligand>
        <name>1-deoxy-D-xylulose 5-phosphate</name>
        <dbReference type="ChEBI" id="CHEBI:57792"/>
    </ligand>
</feature>
<feature type="binding site" evidence="1">
    <location>
        <begin position="209"/>
        <end position="210"/>
    </location>
    <ligand>
        <name>1-deoxy-D-xylulose 5-phosphate</name>
        <dbReference type="ChEBI" id="CHEBI:57792"/>
    </ligand>
</feature>